<feature type="chain" id="PRO_1000093085" description="S-adenosylmethionine synthase">
    <location>
        <begin position="1"/>
        <end position="384"/>
    </location>
</feature>
<feature type="region of interest" description="Flexible loop" evidence="1">
    <location>
        <begin position="99"/>
        <end position="109"/>
    </location>
</feature>
<feature type="binding site" description="in other chain" evidence="1">
    <location>
        <position position="15"/>
    </location>
    <ligand>
        <name>ATP</name>
        <dbReference type="ChEBI" id="CHEBI:30616"/>
        <note>ligand shared between two neighboring subunits</note>
    </ligand>
</feature>
<feature type="binding site" evidence="1">
    <location>
        <position position="17"/>
    </location>
    <ligand>
        <name>Mg(2+)</name>
        <dbReference type="ChEBI" id="CHEBI:18420"/>
    </ligand>
</feature>
<feature type="binding site" evidence="1">
    <location>
        <position position="43"/>
    </location>
    <ligand>
        <name>K(+)</name>
        <dbReference type="ChEBI" id="CHEBI:29103"/>
    </ligand>
</feature>
<feature type="binding site" description="in other chain" evidence="1">
    <location>
        <position position="56"/>
    </location>
    <ligand>
        <name>L-methionine</name>
        <dbReference type="ChEBI" id="CHEBI:57844"/>
        <note>ligand shared between two neighboring subunits</note>
    </ligand>
</feature>
<feature type="binding site" description="in other chain" evidence="1">
    <location>
        <position position="99"/>
    </location>
    <ligand>
        <name>L-methionine</name>
        <dbReference type="ChEBI" id="CHEBI:57844"/>
        <note>ligand shared between two neighboring subunits</note>
    </ligand>
</feature>
<feature type="binding site" description="in other chain" evidence="1">
    <location>
        <begin position="164"/>
        <end position="166"/>
    </location>
    <ligand>
        <name>ATP</name>
        <dbReference type="ChEBI" id="CHEBI:30616"/>
        <note>ligand shared between two neighboring subunits</note>
    </ligand>
</feature>
<feature type="binding site" description="in other chain" evidence="1">
    <location>
        <begin position="231"/>
        <end position="232"/>
    </location>
    <ligand>
        <name>ATP</name>
        <dbReference type="ChEBI" id="CHEBI:30616"/>
        <note>ligand shared between two neighboring subunits</note>
    </ligand>
</feature>
<feature type="binding site" evidence="1">
    <location>
        <position position="240"/>
    </location>
    <ligand>
        <name>ATP</name>
        <dbReference type="ChEBI" id="CHEBI:30616"/>
        <note>ligand shared between two neighboring subunits</note>
    </ligand>
</feature>
<feature type="binding site" evidence="1">
    <location>
        <position position="240"/>
    </location>
    <ligand>
        <name>L-methionine</name>
        <dbReference type="ChEBI" id="CHEBI:57844"/>
        <note>ligand shared between two neighboring subunits</note>
    </ligand>
</feature>
<feature type="binding site" description="in other chain" evidence="1">
    <location>
        <begin position="246"/>
        <end position="247"/>
    </location>
    <ligand>
        <name>ATP</name>
        <dbReference type="ChEBI" id="CHEBI:30616"/>
        <note>ligand shared between two neighboring subunits</note>
    </ligand>
</feature>
<feature type="binding site" evidence="1">
    <location>
        <position position="263"/>
    </location>
    <ligand>
        <name>ATP</name>
        <dbReference type="ChEBI" id="CHEBI:30616"/>
        <note>ligand shared between two neighboring subunits</note>
    </ligand>
</feature>
<feature type="binding site" evidence="1">
    <location>
        <position position="267"/>
    </location>
    <ligand>
        <name>ATP</name>
        <dbReference type="ChEBI" id="CHEBI:30616"/>
        <note>ligand shared between two neighboring subunits</note>
    </ligand>
</feature>
<feature type="binding site" description="in other chain" evidence="1">
    <location>
        <position position="271"/>
    </location>
    <ligand>
        <name>L-methionine</name>
        <dbReference type="ChEBI" id="CHEBI:57844"/>
        <note>ligand shared between two neighboring subunits</note>
    </ligand>
</feature>
<reference key="1">
    <citation type="submission" date="2008-02" db="EMBL/GenBank/DDBJ databases">
        <title>Complete sequence of Shewanella woodyi ATCC 51908.</title>
        <authorList>
            <consortium name="US DOE Joint Genome Institute"/>
            <person name="Copeland A."/>
            <person name="Lucas S."/>
            <person name="Lapidus A."/>
            <person name="Glavina del Rio T."/>
            <person name="Dalin E."/>
            <person name="Tice H."/>
            <person name="Bruce D."/>
            <person name="Goodwin L."/>
            <person name="Pitluck S."/>
            <person name="Sims D."/>
            <person name="Brettin T."/>
            <person name="Detter J.C."/>
            <person name="Han C."/>
            <person name="Kuske C.R."/>
            <person name="Schmutz J."/>
            <person name="Larimer F."/>
            <person name="Land M."/>
            <person name="Hauser L."/>
            <person name="Kyrpides N."/>
            <person name="Lykidis A."/>
            <person name="Zhao J.-S."/>
            <person name="Richardson P."/>
        </authorList>
    </citation>
    <scope>NUCLEOTIDE SEQUENCE [LARGE SCALE GENOMIC DNA]</scope>
    <source>
        <strain>ATCC 51908 / MS32</strain>
    </source>
</reference>
<proteinExistence type="inferred from homology"/>
<accession>B1KF18</accession>
<dbReference type="EC" id="2.5.1.6" evidence="1"/>
<dbReference type="EMBL" id="CP000961">
    <property type="protein sequence ID" value="ACA85169.1"/>
    <property type="molecule type" value="Genomic_DNA"/>
</dbReference>
<dbReference type="RefSeq" id="WP_012323516.1">
    <property type="nucleotide sequence ID" value="NC_010506.1"/>
</dbReference>
<dbReference type="SMR" id="B1KF18"/>
<dbReference type="STRING" id="392500.Swoo_0875"/>
<dbReference type="KEGG" id="swd:Swoo_0875"/>
<dbReference type="eggNOG" id="COG0192">
    <property type="taxonomic scope" value="Bacteria"/>
</dbReference>
<dbReference type="HOGENOM" id="CLU_041802_1_1_6"/>
<dbReference type="UniPathway" id="UPA00315">
    <property type="reaction ID" value="UER00080"/>
</dbReference>
<dbReference type="Proteomes" id="UP000002168">
    <property type="component" value="Chromosome"/>
</dbReference>
<dbReference type="GO" id="GO:0005737">
    <property type="term" value="C:cytoplasm"/>
    <property type="evidence" value="ECO:0007669"/>
    <property type="project" value="UniProtKB-SubCell"/>
</dbReference>
<dbReference type="GO" id="GO:0005524">
    <property type="term" value="F:ATP binding"/>
    <property type="evidence" value="ECO:0007669"/>
    <property type="project" value="UniProtKB-UniRule"/>
</dbReference>
<dbReference type="GO" id="GO:0000287">
    <property type="term" value="F:magnesium ion binding"/>
    <property type="evidence" value="ECO:0007669"/>
    <property type="project" value="UniProtKB-UniRule"/>
</dbReference>
<dbReference type="GO" id="GO:0004478">
    <property type="term" value="F:methionine adenosyltransferase activity"/>
    <property type="evidence" value="ECO:0007669"/>
    <property type="project" value="UniProtKB-UniRule"/>
</dbReference>
<dbReference type="GO" id="GO:0006730">
    <property type="term" value="P:one-carbon metabolic process"/>
    <property type="evidence" value="ECO:0007669"/>
    <property type="project" value="UniProtKB-KW"/>
</dbReference>
<dbReference type="GO" id="GO:0006556">
    <property type="term" value="P:S-adenosylmethionine biosynthetic process"/>
    <property type="evidence" value="ECO:0007669"/>
    <property type="project" value="UniProtKB-UniRule"/>
</dbReference>
<dbReference type="CDD" id="cd18079">
    <property type="entry name" value="S-AdoMet_synt"/>
    <property type="match status" value="1"/>
</dbReference>
<dbReference type="FunFam" id="3.30.300.10:FF:000001">
    <property type="entry name" value="S-adenosylmethionine synthase"/>
    <property type="match status" value="1"/>
</dbReference>
<dbReference type="FunFam" id="3.30.300.10:FF:000003">
    <property type="entry name" value="S-adenosylmethionine synthase"/>
    <property type="match status" value="1"/>
</dbReference>
<dbReference type="Gene3D" id="3.30.300.10">
    <property type="match status" value="3"/>
</dbReference>
<dbReference type="HAMAP" id="MF_00086">
    <property type="entry name" value="S_AdoMet_synth1"/>
    <property type="match status" value="1"/>
</dbReference>
<dbReference type="InterPro" id="IPR022631">
    <property type="entry name" value="ADOMET_SYNTHASE_CS"/>
</dbReference>
<dbReference type="InterPro" id="IPR022630">
    <property type="entry name" value="S-AdoMet_synt_C"/>
</dbReference>
<dbReference type="InterPro" id="IPR022629">
    <property type="entry name" value="S-AdoMet_synt_central"/>
</dbReference>
<dbReference type="InterPro" id="IPR022628">
    <property type="entry name" value="S-AdoMet_synt_N"/>
</dbReference>
<dbReference type="InterPro" id="IPR002133">
    <property type="entry name" value="S-AdoMet_synthetase"/>
</dbReference>
<dbReference type="InterPro" id="IPR022636">
    <property type="entry name" value="S-AdoMet_synthetase_sfam"/>
</dbReference>
<dbReference type="NCBIfam" id="TIGR01034">
    <property type="entry name" value="metK"/>
    <property type="match status" value="1"/>
</dbReference>
<dbReference type="PANTHER" id="PTHR11964">
    <property type="entry name" value="S-ADENOSYLMETHIONINE SYNTHETASE"/>
    <property type="match status" value="1"/>
</dbReference>
<dbReference type="Pfam" id="PF02773">
    <property type="entry name" value="S-AdoMet_synt_C"/>
    <property type="match status" value="1"/>
</dbReference>
<dbReference type="Pfam" id="PF02772">
    <property type="entry name" value="S-AdoMet_synt_M"/>
    <property type="match status" value="1"/>
</dbReference>
<dbReference type="Pfam" id="PF00438">
    <property type="entry name" value="S-AdoMet_synt_N"/>
    <property type="match status" value="1"/>
</dbReference>
<dbReference type="PIRSF" id="PIRSF000497">
    <property type="entry name" value="MAT"/>
    <property type="match status" value="1"/>
</dbReference>
<dbReference type="SUPFAM" id="SSF55973">
    <property type="entry name" value="S-adenosylmethionine synthetase"/>
    <property type="match status" value="3"/>
</dbReference>
<dbReference type="PROSITE" id="PS00376">
    <property type="entry name" value="ADOMET_SYNTHASE_1"/>
    <property type="match status" value="1"/>
</dbReference>
<dbReference type="PROSITE" id="PS00377">
    <property type="entry name" value="ADOMET_SYNTHASE_2"/>
    <property type="match status" value="1"/>
</dbReference>
<protein>
    <recommendedName>
        <fullName evidence="1">S-adenosylmethionine synthase</fullName>
        <shortName evidence="1">AdoMet synthase</shortName>
        <ecNumber evidence="1">2.5.1.6</ecNumber>
    </recommendedName>
    <alternativeName>
        <fullName evidence="1">MAT</fullName>
    </alternativeName>
    <alternativeName>
        <fullName evidence="1">Methionine adenosyltransferase</fullName>
    </alternativeName>
</protein>
<sequence>MAKHLFTSESVSEGHPDKIADQISDAVLDAILEQDPKARVACETYVKTGMVMVGGEVTTSAWVDIEEITRNTVREIGYTHSDMGFDADSCAILNVIGKQSPDINQGVDRADPKEQGAGDQGLMFGYANNETDVFMPAPITYSHMLVKRQSEVRKDKTLPWLRPDAKSQVTFAYNSDGSIAGIDAVVLSTQHSEDVTQADLIEGVMESIIKPVLPAKWLSKETKYFINPTGRFVIGGPVGDCGLTGRKIIVDTYGGMARHGGGAFSGKDPSKVDRSAAYAARYVAKNIVAAGLADRCELQVSYAIGVAEPTSISIETFGTAKVAEELLIDLVRRHFDLRPYGLTEMLNLARPIYKSTAAYGHFGREEFPWEATDKVEALRADAGL</sequence>
<comment type="function">
    <text evidence="1">Catalyzes the formation of S-adenosylmethionine (AdoMet) from methionine and ATP. The overall synthetic reaction is composed of two sequential steps, AdoMet formation and the subsequent tripolyphosphate hydrolysis which occurs prior to release of AdoMet from the enzyme.</text>
</comment>
<comment type="catalytic activity">
    <reaction evidence="1">
        <text>L-methionine + ATP + H2O = S-adenosyl-L-methionine + phosphate + diphosphate</text>
        <dbReference type="Rhea" id="RHEA:21080"/>
        <dbReference type="ChEBI" id="CHEBI:15377"/>
        <dbReference type="ChEBI" id="CHEBI:30616"/>
        <dbReference type="ChEBI" id="CHEBI:33019"/>
        <dbReference type="ChEBI" id="CHEBI:43474"/>
        <dbReference type="ChEBI" id="CHEBI:57844"/>
        <dbReference type="ChEBI" id="CHEBI:59789"/>
        <dbReference type="EC" id="2.5.1.6"/>
    </reaction>
</comment>
<comment type="cofactor">
    <cofactor evidence="1">
        <name>Mg(2+)</name>
        <dbReference type="ChEBI" id="CHEBI:18420"/>
    </cofactor>
    <text evidence="1">Binds 2 divalent ions per subunit.</text>
</comment>
<comment type="cofactor">
    <cofactor evidence="1">
        <name>K(+)</name>
        <dbReference type="ChEBI" id="CHEBI:29103"/>
    </cofactor>
    <text evidence="1">Binds 1 potassium ion per subunit.</text>
</comment>
<comment type="pathway">
    <text evidence="1">Amino-acid biosynthesis; S-adenosyl-L-methionine biosynthesis; S-adenosyl-L-methionine from L-methionine: step 1/1.</text>
</comment>
<comment type="subunit">
    <text evidence="1">Homotetramer; dimer of dimers.</text>
</comment>
<comment type="subcellular location">
    <subcellularLocation>
        <location evidence="1">Cytoplasm</location>
    </subcellularLocation>
</comment>
<comment type="similarity">
    <text evidence="1">Belongs to the AdoMet synthase family.</text>
</comment>
<organism>
    <name type="scientific">Shewanella woodyi (strain ATCC 51908 / MS32)</name>
    <dbReference type="NCBI Taxonomy" id="392500"/>
    <lineage>
        <taxon>Bacteria</taxon>
        <taxon>Pseudomonadati</taxon>
        <taxon>Pseudomonadota</taxon>
        <taxon>Gammaproteobacteria</taxon>
        <taxon>Alteromonadales</taxon>
        <taxon>Shewanellaceae</taxon>
        <taxon>Shewanella</taxon>
    </lineage>
</organism>
<evidence type="ECO:0000255" key="1">
    <source>
        <dbReference type="HAMAP-Rule" id="MF_00086"/>
    </source>
</evidence>
<keyword id="KW-0067">ATP-binding</keyword>
<keyword id="KW-0963">Cytoplasm</keyword>
<keyword id="KW-0460">Magnesium</keyword>
<keyword id="KW-0479">Metal-binding</keyword>
<keyword id="KW-0547">Nucleotide-binding</keyword>
<keyword id="KW-0554">One-carbon metabolism</keyword>
<keyword id="KW-0630">Potassium</keyword>
<keyword id="KW-1185">Reference proteome</keyword>
<keyword id="KW-0808">Transferase</keyword>
<name>METK_SHEWM</name>
<gene>
    <name evidence="1" type="primary">metK</name>
    <name type="ordered locus">Swoo_0875</name>
</gene>